<organism>
    <name type="scientific">Streptococcus equi subsp. equi (strain 4047)</name>
    <dbReference type="NCBI Taxonomy" id="553482"/>
    <lineage>
        <taxon>Bacteria</taxon>
        <taxon>Bacillati</taxon>
        <taxon>Bacillota</taxon>
        <taxon>Bacilli</taxon>
        <taxon>Lactobacillales</taxon>
        <taxon>Streptococcaceae</taxon>
        <taxon>Streptococcus</taxon>
    </lineage>
</organism>
<feature type="chain" id="PRO_1000165075" description="HPr kinase/phosphorylase">
    <location>
        <begin position="1"/>
        <end position="310"/>
    </location>
</feature>
<feature type="region of interest" description="Important for the catalytic mechanism of both phosphorylation and dephosphorylation" evidence="1">
    <location>
        <begin position="201"/>
        <end position="210"/>
    </location>
</feature>
<feature type="region of interest" description="Important for the catalytic mechanism of dephosphorylation" evidence="1">
    <location>
        <begin position="264"/>
        <end position="269"/>
    </location>
</feature>
<feature type="active site" evidence="1">
    <location>
        <position position="138"/>
    </location>
</feature>
<feature type="active site" evidence="1">
    <location>
        <position position="159"/>
    </location>
</feature>
<feature type="active site" description="Proton acceptor; for phosphorylation activity. Proton donor; for dephosphorylation activity" evidence="1">
    <location>
        <position position="177"/>
    </location>
</feature>
<feature type="active site" evidence="1">
    <location>
        <position position="243"/>
    </location>
</feature>
<feature type="binding site" evidence="1">
    <location>
        <begin position="153"/>
        <end position="160"/>
    </location>
    <ligand>
        <name>ATP</name>
        <dbReference type="ChEBI" id="CHEBI:30616"/>
    </ligand>
</feature>
<feature type="binding site" evidence="1">
    <location>
        <position position="160"/>
    </location>
    <ligand>
        <name>Mg(2+)</name>
        <dbReference type="ChEBI" id="CHEBI:18420"/>
    </ligand>
</feature>
<feature type="binding site" evidence="1">
    <location>
        <position position="202"/>
    </location>
    <ligand>
        <name>Mg(2+)</name>
        <dbReference type="ChEBI" id="CHEBI:18420"/>
    </ligand>
</feature>
<accession>C0M7Z4</accession>
<comment type="function">
    <text evidence="1">Catalyzes the ATP- as well as the pyrophosphate-dependent phosphorylation of a specific serine residue in HPr, a phosphocarrier protein of the phosphoenolpyruvate-dependent sugar phosphotransferase system (PTS). HprK/P also catalyzes the pyrophosphate-producing, inorganic phosphate-dependent dephosphorylation (phosphorolysis) of seryl-phosphorylated HPr (P-Ser-HPr). The two antagonistic activities of HprK/P are regulated by several intracellular metabolites, which change their concentration in response to the absence or presence of rapidly metabolisable carbon sources (glucose, fructose, etc.) in the growth medium. Therefore, by controlling the phosphorylation state of HPr, HPrK/P is a sensor enzyme that plays a major role in the regulation of carbon metabolism and sugar transport: it mediates carbon catabolite repression (CCR), and regulates PTS-catalyzed carbohydrate uptake and inducer exclusion.</text>
</comment>
<comment type="catalytic activity">
    <reaction evidence="1">
        <text>[HPr protein]-L-serine + ATP = [HPr protein]-O-phospho-L-serine + ADP + H(+)</text>
        <dbReference type="Rhea" id="RHEA:46600"/>
        <dbReference type="Rhea" id="RHEA-COMP:11602"/>
        <dbReference type="Rhea" id="RHEA-COMP:11603"/>
        <dbReference type="ChEBI" id="CHEBI:15378"/>
        <dbReference type="ChEBI" id="CHEBI:29999"/>
        <dbReference type="ChEBI" id="CHEBI:30616"/>
        <dbReference type="ChEBI" id="CHEBI:83421"/>
        <dbReference type="ChEBI" id="CHEBI:456216"/>
    </reaction>
</comment>
<comment type="catalytic activity">
    <reaction evidence="1">
        <text>[HPr protein]-O-phospho-L-serine + phosphate + H(+) = [HPr protein]-L-serine + diphosphate</text>
        <dbReference type="Rhea" id="RHEA:46604"/>
        <dbReference type="Rhea" id="RHEA-COMP:11602"/>
        <dbReference type="Rhea" id="RHEA-COMP:11603"/>
        <dbReference type="ChEBI" id="CHEBI:15378"/>
        <dbReference type="ChEBI" id="CHEBI:29999"/>
        <dbReference type="ChEBI" id="CHEBI:33019"/>
        <dbReference type="ChEBI" id="CHEBI:43474"/>
        <dbReference type="ChEBI" id="CHEBI:83421"/>
    </reaction>
</comment>
<comment type="cofactor">
    <cofactor evidence="1">
        <name>Mg(2+)</name>
        <dbReference type="ChEBI" id="CHEBI:18420"/>
    </cofactor>
</comment>
<comment type="subunit">
    <text evidence="1">Homohexamer.</text>
</comment>
<comment type="domain">
    <text evidence="1">The Walker A ATP-binding motif also binds Pi and PPi.</text>
</comment>
<comment type="miscellaneous">
    <text evidence="1">Both phosphorylation and phosphorolysis are carried out by the same active site and suggest a common mechanism for both reactions.</text>
</comment>
<comment type="similarity">
    <text evidence="1">Belongs to the HPrK/P family.</text>
</comment>
<reference key="1">
    <citation type="journal article" date="2009" name="PLoS Pathog.">
        <title>Genomic evidence for the evolution of Streptococcus equi: host restriction, increased virulence, and genetic exchange with human pathogens.</title>
        <authorList>
            <person name="Holden M.T.G."/>
            <person name="Heather Z."/>
            <person name="Paillot R."/>
            <person name="Steward K.F."/>
            <person name="Webb K."/>
            <person name="Ainslie F."/>
            <person name="Jourdan T."/>
            <person name="Bason N.C."/>
            <person name="Holroyd N.E."/>
            <person name="Mungall K."/>
            <person name="Quail M.A."/>
            <person name="Sanders M."/>
            <person name="Simmonds M."/>
            <person name="Willey D."/>
            <person name="Brooks K."/>
            <person name="Aanensen D.M."/>
            <person name="Spratt B.G."/>
            <person name="Jolley K.A."/>
            <person name="Maiden M.C.J."/>
            <person name="Kehoe M."/>
            <person name="Chanter N."/>
            <person name="Bentley S.D."/>
            <person name="Robinson C."/>
            <person name="Maskell D.J."/>
            <person name="Parkhill J."/>
            <person name="Waller A.S."/>
        </authorList>
    </citation>
    <scope>NUCLEOTIDE SEQUENCE [LARGE SCALE GENOMIC DNA]</scope>
    <source>
        <strain>4047</strain>
    </source>
</reference>
<protein>
    <recommendedName>
        <fullName evidence="1">HPr kinase/phosphorylase</fullName>
        <shortName evidence="1">HPrK/P</shortName>
        <ecNumber evidence="1">2.7.11.-</ecNumber>
        <ecNumber evidence="1">2.7.4.-</ecNumber>
    </recommendedName>
    <alternativeName>
        <fullName evidence="1">HPr(Ser) kinase/phosphorylase</fullName>
    </alternativeName>
</protein>
<gene>
    <name evidence="1" type="primary">hprK</name>
    <name type="ordered locus">SEQ_1538</name>
</gene>
<keyword id="KW-0067">ATP-binding</keyword>
<keyword id="KW-0119">Carbohydrate metabolism</keyword>
<keyword id="KW-0418">Kinase</keyword>
<keyword id="KW-0460">Magnesium</keyword>
<keyword id="KW-0479">Metal-binding</keyword>
<keyword id="KW-0511">Multifunctional enzyme</keyword>
<keyword id="KW-0547">Nucleotide-binding</keyword>
<keyword id="KW-0723">Serine/threonine-protein kinase</keyword>
<keyword id="KW-0808">Transferase</keyword>
<evidence type="ECO:0000255" key="1">
    <source>
        <dbReference type="HAMAP-Rule" id="MF_01249"/>
    </source>
</evidence>
<name>HPRK_STRE4</name>
<proteinExistence type="inferred from homology"/>
<sequence length="310" mass="34505">MTVTVKMLVTKVKLDVVYATDDLLEKEITTSDISRPGLEMTGYFDYYAPERLQLFGMKEWSYLTQMTSHNRYSVLKEMFKKDTPAVIVSRGLAIPEEMVQAAQEEGIALFSSRVSTSRLAGEMSYFLDASLAERTSVHGVLMDIYGMGVLIQGDSGIGKSETGLELVKRGHRLVADDRVDVFAKDEETLWGEPAEILRHLLEIRGVGIIDVMSLYGASAVKDSSQVQLAIYLENFEAGKVFDRLGNGNEEITFSGVSIPRIRIPVKTGRNVSVVIEAAAMNHRAKEMGFDATKTFEERLTRLISKNEEGK</sequence>
<dbReference type="EC" id="2.7.11.-" evidence="1"/>
<dbReference type="EC" id="2.7.4.-" evidence="1"/>
<dbReference type="EMBL" id="FM204883">
    <property type="protein sequence ID" value="CAW94480.1"/>
    <property type="molecule type" value="Genomic_DNA"/>
</dbReference>
<dbReference type="RefSeq" id="WP_012515957.1">
    <property type="nucleotide sequence ID" value="NC_012471.1"/>
</dbReference>
<dbReference type="SMR" id="C0M7Z4"/>
<dbReference type="GeneID" id="83705224"/>
<dbReference type="KEGG" id="seu:SEQ_1538"/>
<dbReference type="HOGENOM" id="CLU_052030_0_1_9"/>
<dbReference type="OrthoDB" id="9778803at2"/>
<dbReference type="Proteomes" id="UP000001365">
    <property type="component" value="Chromosome"/>
</dbReference>
<dbReference type="GO" id="GO:0005524">
    <property type="term" value="F:ATP binding"/>
    <property type="evidence" value="ECO:0007669"/>
    <property type="project" value="UniProtKB-UniRule"/>
</dbReference>
<dbReference type="GO" id="GO:0000287">
    <property type="term" value="F:magnesium ion binding"/>
    <property type="evidence" value="ECO:0007669"/>
    <property type="project" value="UniProtKB-UniRule"/>
</dbReference>
<dbReference type="GO" id="GO:0000155">
    <property type="term" value="F:phosphorelay sensor kinase activity"/>
    <property type="evidence" value="ECO:0007669"/>
    <property type="project" value="InterPro"/>
</dbReference>
<dbReference type="GO" id="GO:0004674">
    <property type="term" value="F:protein serine/threonine kinase activity"/>
    <property type="evidence" value="ECO:0007669"/>
    <property type="project" value="UniProtKB-KW"/>
</dbReference>
<dbReference type="GO" id="GO:0004712">
    <property type="term" value="F:protein serine/threonine/tyrosine kinase activity"/>
    <property type="evidence" value="ECO:0007669"/>
    <property type="project" value="UniProtKB-UniRule"/>
</dbReference>
<dbReference type="GO" id="GO:0006109">
    <property type="term" value="P:regulation of carbohydrate metabolic process"/>
    <property type="evidence" value="ECO:0007669"/>
    <property type="project" value="UniProtKB-UniRule"/>
</dbReference>
<dbReference type="CDD" id="cd01918">
    <property type="entry name" value="HprK_C"/>
    <property type="match status" value="1"/>
</dbReference>
<dbReference type="FunFam" id="3.40.50.300:FF:000174">
    <property type="entry name" value="HPr kinase/phosphorylase"/>
    <property type="match status" value="1"/>
</dbReference>
<dbReference type="Gene3D" id="3.40.1390.20">
    <property type="entry name" value="HprK N-terminal domain-like"/>
    <property type="match status" value="1"/>
</dbReference>
<dbReference type="Gene3D" id="3.40.50.300">
    <property type="entry name" value="P-loop containing nucleotide triphosphate hydrolases"/>
    <property type="match status" value="1"/>
</dbReference>
<dbReference type="HAMAP" id="MF_01249">
    <property type="entry name" value="HPr_kinase"/>
    <property type="match status" value="1"/>
</dbReference>
<dbReference type="InterPro" id="IPR003755">
    <property type="entry name" value="HPr(Ser)_kin/Pase"/>
</dbReference>
<dbReference type="InterPro" id="IPR011104">
    <property type="entry name" value="Hpr_kin/Pase_C"/>
</dbReference>
<dbReference type="InterPro" id="IPR011126">
    <property type="entry name" value="Hpr_kin/Pase_Hpr_N"/>
</dbReference>
<dbReference type="InterPro" id="IPR027417">
    <property type="entry name" value="P-loop_NTPase"/>
</dbReference>
<dbReference type="InterPro" id="IPR028979">
    <property type="entry name" value="Ser_kin/Pase_Hpr-like_N_sf"/>
</dbReference>
<dbReference type="NCBIfam" id="TIGR00679">
    <property type="entry name" value="hpr-ser"/>
    <property type="match status" value="1"/>
</dbReference>
<dbReference type="PANTHER" id="PTHR30305:SF1">
    <property type="entry name" value="HPR KINASE_PHOSPHORYLASE"/>
    <property type="match status" value="1"/>
</dbReference>
<dbReference type="PANTHER" id="PTHR30305">
    <property type="entry name" value="PROTEIN YJDM-RELATED"/>
    <property type="match status" value="1"/>
</dbReference>
<dbReference type="Pfam" id="PF07475">
    <property type="entry name" value="Hpr_kinase_C"/>
    <property type="match status" value="1"/>
</dbReference>
<dbReference type="Pfam" id="PF02603">
    <property type="entry name" value="Hpr_kinase_N"/>
    <property type="match status" value="1"/>
</dbReference>
<dbReference type="SUPFAM" id="SSF75138">
    <property type="entry name" value="HprK N-terminal domain-like"/>
    <property type="match status" value="1"/>
</dbReference>
<dbReference type="SUPFAM" id="SSF53795">
    <property type="entry name" value="PEP carboxykinase-like"/>
    <property type="match status" value="1"/>
</dbReference>